<reference key="1">
    <citation type="journal article" date="1999" name="Nature">
        <title>Sequence and analysis of chromosome 4 of the plant Arabidopsis thaliana.</title>
        <authorList>
            <person name="Mayer K.F.X."/>
            <person name="Schueller C."/>
            <person name="Wambutt R."/>
            <person name="Murphy G."/>
            <person name="Volckaert G."/>
            <person name="Pohl T."/>
            <person name="Duesterhoeft A."/>
            <person name="Stiekema W."/>
            <person name="Entian K.-D."/>
            <person name="Terryn N."/>
            <person name="Harris B."/>
            <person name="Ansorge W."/>
            <person name="Brandt P."/>
            <person name="Grivell L.A."/>
            <person name="Rieger M."/>
            <person name="Weichselgartner M."/>
            <person name="de Simone V."/>
            <person name="Obermaier B."/>
            <person name="Mache R."/>
            <person name="Mueller M."/>
            <person name="Kreis M."/>
            <person name="Delseny M."/>
            <person name="Puigdomenech P."/>
            <person name="Watson M."/>
            <person name="Schmidtheini T."/>
            <person name="Reichert B."/>
            <person name="Portetelle D."/>
            <person name="Perez-Alonso M."/>
            <person name="Boutry M."/>
            <person name="Bancroft I."/>
            <person name="Vos P."/>
            <person name="Hoheisel J."/>
            <person name="Zimmermann W."/>
            <person name="Wedler H."/>
            <person name="Ridley P."/>
            <person name="Langham S.-A."/>
            <person name="McCullagh B."/>
            <person name="Bilham L."/>
            <person name="Robben J."/>
            <person name="van der Schueren J."/>
            <person name="Grymonprez B."/>
            <person name="Chuang Y.-J."/>
            <person name="Vandenbussche F."/>
            <person name="Braeken M."/>
            <person name="Weltjens I."/>
            <person name="Voet M."/>
            <person name="Bastiaens I."/>
            <person name="Aert R."/>
            <person name="Defoor E."/>
            <person name="Weitzenegger T."/>
            <person name="Bothe G."/>
            <person name="Ramsperger U."/>
            <person name="Hilbert H."/>
            <person name="Braun M."/>
            <person name="Holzer E."/>
            <person name="Brandt A."/>
            <person name="Peters S."/>
            <person name="van Staveren M."/>
            <person name="Dirkse W."/>
            <person name="Mooijman P."/>
            <person name="Klein Lankhorst R."/>
            <person name="Rose M."/>
            <person name="Hauf J."/>
            <person name="Koetter P."/>
            <person name="Berneiser S."/>
            <person name="Hempel S."/>
            <person name="Feldpausch M."/>
            <person name="Lamberth S."/>
            <person name="Van den Daele H."/>
            <person name="De Keyser A."/>
            <person name="Buysshaert C."/>
            <person name="Gielen J."/>
            <person name="Villarroel R."/>
            <person name="De Clercq R."/>
            <person name="van Montagu M."/>
            <person name="Rogers J."/>
            <person name="Cronin A."/>
            <person name="Quail M.A."/>
            <person name="Bray-Allen S."/>
            <person name="Clark L."/>
            <person name="Doggett J."/>
            <person name="Hall S."/>
            <person name="Kay M."/>
            <person name="Lennard N."/>
            <person name="McLay K."/>
            <person name="Mayes R."/>
            <person name="Pettett A."/>
            <person name="Rajandream M.A."/>
            <person name="Lyne M."/>
            <person name="Benes V."/>
            <person name="Rechmann S."/>
            <person name="Borkova D."/>
            <person name="Bloecker H."/>
            <person name="Scharfe M."/>
            <person name="Grimm M."/>
            <person name="Loehnert T.-H."/>
            <person name="Dose S."/>
            <person name="de Haan M."/>
            <person name="Maarse A.C."/>
            <person name="Schaefer M."/>
            <person name="Mueller-Auer S."/>
            <person name="Gabel C."/>
            <person name="Fuchs M."/>
            <person name="Fartmann B."/>
            <person name="Granderath K."/>
            <person name="Dauner D."/>
            <person name="Herzl A."/>
            <person name="Neumann S."/>
            <person name="Argiriou A."/>
            <person name="Vitale D."/>
            <person name="Liguori R."/>
            <person name="Piravandi E."/>
            <person name="Massenet O."/>
            <person name="Quigley F."/>
            <person name="Clabauld G."/>
            <person name="Muendlein A."/>
            <person name="Felber R."/>
            <person name="Schnabl S."/>
            <person name="Hiller R."/>
            <person name="Schmidt W."/>
            <person name="Lecharny A."/>
            <person name="Aubourg S."/>
            <person name="Chefdor F."/>
            <person name="Cooke R."/>
            <person name="Berger C."/>
            <person name="Monfort A."/>
            <person name="Casacuberta E."/>
            <person name="Gibbons T."/>
            <person name="Weber N."/>
            <person name="Vandenbol M."/>
            <person name="Bargues M."/>
            <person name="Terol J."/>
            <person name="Torres A."/>
            <person name="Perez-Perez A."/>
            <person name="Purnelle B."/>
            <person name="Bent E."/>
            <person name="Johnson S."/>
            <person name="Tacon D."/>
            <person name="Jesse T."/>
            <person name="Heijnen L."/>
            <person name="Schwarz S."/>
            <person name="Scholler P."/>
            <person name="Heber S."/>
            <person name="Francs P."/>
            <person name="Bielke C."/>
            <person name="Frishman D."/>
            <person name="Haase D."/>
            <person name="Lemcke K."/>
            <person name="Mewes H.-W."/>
            <person name="Stocker S."/>
            <person name="Zaccaria P."/>
            <person name="Bevan M."/>
            <person name="Wilson R.K."/>
            <person name="de la Bastide M."/>
            <person name="Habermann K."/>
            <person name="Parnell L."/>
            <person name="Dedhia N."/>
            <person name="Gnoj L."/>
            <person name="Schutz K."/>
            <person name="Huang E."/>
            <person name="Spiegel L."/>
            <person name="Sekhon M."/>
            <person name="Murray J."/>
            <person name="Sheet P."/>
            <person name="Cordes M."/>
            <person name="Abu-Threideh J."/>
            <person name="Stoneking T."/>
            <person name="Kalicki J."/>
            <person name="Graves T."/>
            <person name="Harmon G."/>
            <person name="Edwards J."/>
            <person name="Latreille P."/>
            <person name="Courtney L."/>
            <person name="Cloud J."/>
            <person name="Abbott A."/>
            <person name="Scott K."/>
            <person name="Johnson D."/>
            <person name="Minx P."/>
            <person name="Bentley D."/>
            <person name="Fulton B."/>
            <person name="Miller N."/>
            <person name="Greco T."/>
            <person name="Kemp K."/>
            <person name="Kramer J."/>
            <person name="Fulton L."/>
            <person name="Mardis E."/>
            <person name="Dante M."/>
            <person name="Pepin K."/>
            <person name="Hillier L.W."/>
            <person name="Nelson J."/>
            <person name="Spieth J."/>
            <person name="Ryan E."/>
            <person name="Andrews S."/>
            <person name="Geisel C."/>
            <person name="Layman D."/>
            <person name="Du H."/>
            <person name="Ali J."/>
            <person name="Berghoff A."/>
            <person name="Jones K."/>
            <person name="Drone K."/>
            <person name="Cotton M."/>
            <person name="Joshu C."/>
            <person name="Antonoiu B."/>
            <person name="Zidanic M."/>
            <person name="Strong C."/>
            <person name="Sun H."/>
            <person name="Lamar B."/>
            <person name="Yordan C."/>
            <person name="Ma P."/>
            <person name="Zhong J."/>
            <person name="Preston R."/>
            <person name="Vil D."/>
            <person name="Shekher M."/>
            <person name="Matero A."/>
            <person name="Shah R."/>
            <person name="Swaby I.K."/>
            <person name="O'Shaughnessy A."/>
            <person name="Rodriguez M."/>
            <person name="Hoffman J."/>
            <person name="Till S."/>
            <person name="Granat S."/>
            <person name="Shohdy N."/>
            <person name="Hasegawa A."/>
            <person name="Hameed A."/>
            <person name="Lodhi M."/>
            <person name="Johnson A."/>
            <person name="Chen E."/>
            <person name="Marra M.A."/>
            <person name="Martienssen R."/>
            <person name="McCombie W.R."/>
        </authorList>
    </citation>
    <scope>NUCLEOTIDE SEQUENCE [LARGE SCALE GENOMIC DNA]</scope>
    <source>
        <strain>cv. Columbia</strain>
    </source>
</reference>
<reference key="2">
    <citation type="journal article" date="2017" name="Plant J.">
        <title>Araport11: a complete reannotation of the Arabidopsis thaliana reference genome.</title>
        <authorList>
            <person name="Cheng C.Y."/>
            <person name="Krishnakumar V."/>
            <person name="Chan A.P."/>
            <person name="Thibaud-Nissen F."/>
            <person name="Schobel S."/>
            <person name="Town C.D."/>
        </authorList>
    </citation>
    <scope>GENOME REANNOTATION</scope>
    <source>
        <strain>cv. Columbia</strain>
    </source>
</reference>
<reference key="3">
    <citation type="journal article" date="2003" name="Science">
        <title>Empirical analysis of transcriptional activity in the Arabidopsis genome.</title>
        <authorList>
            <person name="Yamada K."/>
            <person name="Lim J."/>
            <person name="Dale J.M."/>
            <person name="Chen H."/>
            <person name="Shinn P."/>
            <person name="Palm C.J."/>
            <person name="Southwick A.M."/>
            <person name="Wu H.C."/>
            <person name="Kim C.J."/>
            <person name="Nguyen M."/>
            <person name="Pham P.K."/>
            <person name="Cheuk R.F."/>
            <person name="Karlin-Newmann G."/>
            <person name="Liu S.X."/>
            <person name="Lam B."/>
            <person name="Sakano H."/>
            <person name="Wu T."/>
            <person name="Yu G."/>
            <person name="Miranda M."/>
            <person name="Quach H.L."/>
            <person name="Tripp M."/>
            <person name="Chang C.H."/>
            <person name="Lee J.M."/>
            <person name="Toriumi M.J."/>
            <person name="Chan M.M."/>
            <person name="Tang C.C."/>
            <person name="Onodera C.S."/>
            <person name="Deng J.M."/>
            <person name="Akiyama K."/>
            <person name="Ansari Y."/>
            <person name="Arakawa T."/>
            <person name="Banh J."/>
            <person name="Banno F."/>
            <person name="Bowser L."/>
            <person name="Brooks S.Y."/>
            <person name="Carninci P."/>
            <person name="Chao Q."/>
            <person name="Choy N."/>
            <person name="Enju A."/>
            <person name="Goldsmith A.D."/>
            <person name="Gurjal M."/>
            <person name="Hansen N.F."/>
            <person name="Hayashizaki Y."/>
            <person name="Johnson-Hopson C."/>
            <person name="Hsuan V.W."/>
            <person name="Iida K."/>
            <person name="Karnes M."/>
            <person name="Khan S."/>
            <person name="Koesema E."/>
            <person name="Ishida J."/>
            <person name="Jiang P.X."/>
            <person name="Jones T."/>
            <person name="Kawai J."/>
            <person name="Kamiya A."/>
            <person name="Meyers C."/>
            <person name="Nakajima M."/>
            <person name="Narusaka M."/>
            <person name="Seki M."/>
            <person name="Sakurai T."/>
            <person name="Satou M."/>
            <person name="Tamse R."/>
            <person name="Vaysberg M."/>
            <person name="Wallender E.K."/>
            <person name="Wong C."/>
            <person name="Yamamura Y."/>
            <person name="Yuan S."/>
            <person name="Shinozaki K."/>
            <person name="Davis R.W."/>
            <person name="Theologis A."/>
            <person name="Ecker J.R."/>
        </authorList>
    </citation>
    <scope>NUCLEOTIDE SEQUENCE [LARGE SCALE MRNA]</scope>
    <source>
        <strain>cv. Columbia</strain>
    </source>
</reference>
<reference key="4">
    <citation type="journal article" date="2010" name="Plant Cell">
        <title>Identification and characterization of nuclear pore complex components in Arabidopsis thaliana.</title>
        <authorList>
            <person name="Tamura K."/>
            <person name="Fukao Y."/>
            <person name="Iwamoto M."/>
            <person name="Haraguchi T."/>
            <person name="Hara-Nishimura I."/>
        </authorList>
    </citation>
    <scope>IDENTIFICATION IN THE NUCLEAR PORE COMPLEX</scope>
    <scope>SUBCELLULAR LOCATION</scope>
    <scope>NOMENCLATURE</scope>
</reference>
<sequence>MPGMSSESGGGELVLFSTKEKTPVLYPLSYGLKSPVHRLSISWGCGNNLRVTVLRNPELRDDDDGEVGGKVVNVRLSGEDGEISDPQWRRIAYGSVSPFALLQSRRNSISSLSKMDMSSSLYQTAWWEYVMEYSRDIKSLLSNTISLPAPLIEDPRSVIKNAEEPTSLKAAWELMELFYADKTCLSWLPERLVDWLSEYDILLSSSHPTIYSKLQDFQKELVGLQAIEDDPRYWEVMASALSVGWLEIVVKLLHLHGSYQLDQLGHRETENGLVEAVAVLISKMPRMRPQLEDGKFGECSAAKPDFMKTRERWQSQITKLECSAFWVQCAHHQTREGLRNMLKIMIGNADCLRAATCNWMELFVSHLLYLRPFTKGLDGMHSLAQKCVQSKPVNTSHKLLRLLIGILGENTEVVLAECSKEFGSWMVAHAMELLTAGSEEGEVLVHEEQRKLGGINMEELHRLVYAQVLSSHALTWQIAPIYLASCEKQGLGLLELLFYRQPVQENQMLIKSLEICRLYELSNVSAKLMKISGVHHWKHGRKGSGIFWLQQARDENCLSVIAQQLFDSVGKSLSDESLKQWEGLVELLGSESQISGGLDFLHKYRDFKRSLKVVHDGKTIDAAHEAVERLVSLMKSPSTPQRFWLPLLHDSLKLLNWPERSLLNVTQTNLMLNKLQELSIARLRPGFIESELSAQAVGSVRLALATNLGRAFLEEC</sequence>
<accession>Q8RXH2</accession>
<accession>O82634</accession>
<accession>Q9ASW9</accession>
<comment type="function">
    <text evidence="1">Functions as a component of the nuclear pore complex (NPC).</text>
</comment>
<comment type="subunit">
    <text evidence="5">Part of the nuclear pore complex (NPC). The NPC has an eight-fold symmetrical structure comprising a central transport channel and two rings, the cytoplasmic and nuclear rings, to which eight filaments are attached. The cytoplasmic filaments have loose ends, while the nuclear filaments are joined in a distal ring, forming a nuclear basket. NPCs are highly dynamic in configuration and composition, and can be devided in 3 subcomplexes, the NUP62 subcomplex, the NUP107-160 subcomplex and the NUP93 subcomplex, containing approximately 30 different nucleoporin proteins.</text>
</comment>
<comment type="subcellular location">
    <subcellularLocation>
        <location evidence="2">Nucleus envelope</location>
    </subcellularLocation>
    <subcellularLocation>
        <location evidence="5">Nucleus</location>
        <location evidence="5">Nuclear pore complex</location>
    </subcellularLocation>
</comment>
<comment type="similarity">
    <text evidence="4">Belongs to the nucleoporin Nup85 family.</text>
</comment>
<comment type="sequence caution" evidence="4">
    <conflict type="erroneous initiation">
        <sequence resource="EMBL-CDS" id="AAK32793"/>
    </conflict>
    <text>Truncated N-terminus.</text>
</comment>
<comment type="sequence caution" evidence="4">
    <conflict type="erroneous gene model prediction">
        <sequence resource="EMBL-CDS" id="CAA21200"/>
    </conflict>
    <text>The predicted gene At4g32910 has been split into 2 genes: At4g32910 and At4g32915.</text>
</comment>
<comment type="sequence caution" evidence="4">
    <conflict type="erroneous gene model prediction">
        <sequence resource="EMBL-CDS" id="CAB80008"/>
    </conflict>
    <text>The predicted gene At4g32910 has been split into 2 genes: At4g32910 and At4g32915.</text>
</comment>
<name>NUP85_ARATH</name>
<proteinExistence type="evidence at protein level"/>
<feature type="chain" id="PRO_0000413288" description="Nuclear pore complex protein NUP85">
    <location>
        <begin position="1"/>
        <end position="716"/>
    </location>
</feature>
<evidence type="ECO:0000250" key="1"/>
<evidence type="ECO:0000269" key="2">
    <source>
    </source>
</evidence>
<evidence type="ECO:0000303" key="3">
    <source>
    </source>
</evidence>
<evidence type="ECO:0000305" key="4"/>
<evidence type="ECO:0000305" key="5">
    <source>
    </source>
</evidence>
<evidence type="ECO:0000312" key="6">
    <source>
        <dbReference type="Araport" id="AT4G32910"/>
    </source>
</evidence>
<evidence type="ECO:0000312" key="7">
    <source>
        <dbReference type="EMBL" id="CAA21200.1"/>
    </source>
</evidence>
<keyword id="KW-0509">mRNA transport</keyword>
<keyword id="KW-0906">Nuclear pore complex</keyword>
<keyword id="KW-0539">Nucleus</keyword>
<keyword id="KW-0653">Protein transport</keyword>
<keyword id="KW-1185">Reference proteome</keyword>
<keyword id="KW-0811">Translocation</keyword>
<keyword id="KW-0813">Transport</keyword>
<organism>
    <name type="scientific">Arabidopsis thaliana</name>
    <name type="common">Mouse-ear cress</name>
    <dbReference type="NCBI Taxonomy" id="3702"/>
    <lineage>
        <taxon>Eukaryota</taxon>
        <taxon>Viridiplantae</taxon>
        <taxon>Streptophyta</taxon>
        <taxon>Embryophyta</taxon>
        <taxon>Tracheophyta</taxon>
        <taxon>Spermatophyta</taxon>
        <taxon>Magnoliopsida</taxon>
        <taxon>eudicotyledons</taxon>
        <taxon>Gunneridae</taxon>
        <taxon>Pentapetalae</taxon>
        <taxon>rosids</taxon>
        <taxon>malvids</taxon>
        <taxon>Brassicales</taxon>
        <taxon>Brassicaceae</taxon>
        <taxon>Camelineae</taxon>
        <taxon>Arabidopsis</taxon>
    </lineage>
</organism>
<protein>
    <recommendedName>
        <fullName>Nuclear pore complex protein NUP85</fullName>
    </recommendedName>
    <alternativeName>
        <fullName evidence="3">Nuclear pore complex protein NUP75</fullName>
    </alternativeName>
    <alternativeName>
        <fullName>Nucleoporin 75</fullName>
    </alternativeName>
    <alternativeName>
        <fullName>Nucleoporin 85</fullName>
    </alternativeName>
</protein>
<dbReference type="EMBL" id="AL031804">
    <property type="protein sequence ID" value="CAA21200.1"/>
    <property type="status" value="ALT_SEQ"/>
    <property type="molecule type" value="Genomic_DNA"/>
</dbReference>
<dbReference type="EMBL" id="AL161582">
    <property type="protein sequence ID" value="CAB80008.1"/>
    <property type="status" value="ALT_SEQ"/>
    <property type="molecule type" value="Genomic_DNA"/>
</dbReference>
<dbReference type="EMBL" id="CP002687">
    <property type="protein sequence ID" value="AEE86142.1"/>
    <property type="molecule type" value="Genomic_DNA"/>
</dbReference>
<dbReference type="EMBL" id="AF361625">
    <property type="protein sequence ID" value="AAK32793.1"/>
    <property type="status" value="ALT_INIT"/>
    <property type="molecule type" value="mRNA"/>
</dbReference>
<dbReference type="EMBL" id="AY081256">
    <property type="protein sequence ID" value="AAL91145.1"/>
    <property type="molecule type" value="mRNA"/>
</dbReference>
<dbReference type="EMBL" id="BT002244">
    <property type="protein sequence ID" value="AAN72255.1"/>
    <property type="molecule type" value="mRNA"/>
</dbReference>
<dbReference type="RefSeq" id="NP_567908.1">
    <property type="nucleotide sequence ID" value="NM_119444.4"/>
</dbReference>
<dbReference type="SMR" id="Q8RXH2"/>
<dbReference type="BioGRID" id="14712">
    <property type="interactions" value="22"/>
</dbReference>
<dbReference type="FunCoup" id="Q8RXH2">
    <property type="interactions" value="4163"/>
</dbReference>
<dbReference type="STRING" id="3702.Q8RXH2"/>
<dbReference type="iPTMnet" id="Q8RXH2"/>
<dbReference type="PaxDb" id="3702-AT4G32910.1"/>
<dbReference type="ProteomicsDB" id="248751"/>
<dbReference type="EnsemblPlants" id="AT4G32910.1">
    <property type="protein sequence ID" value="AT4G32910.1"/>
    <property type="gene ID" value="AT4G32910"/>
</dbReference>
<dbReference type="GeneID" id="829427"/>
<dbReference type="Gramene" id="AT4G32910.1">
    <property type="protein sequence ID" value="AT4G32910.1"/>
    <property type="gene ID" value="AT4G32910"/>
</dbReference>
<dbReference type="KEGG" id="ath:AT4G32910"/>
<dbReference type="Araport" id="AT4G32910"/>
<dbReference type="TAIR" id="AT4G32910">
    <property type="gene designation" value="SBB1"/>
</dbReference>
<dbReference type="eggNOG" id="KOG2271">
    <property type="taxonomic scope" value="Eukaryota"/>
</dbReference>
<dbReference type="HOGENOM" id="CLU_024025_0_0_1"/>
<dbReference type="InParanoid" id="Q8RXH2"/>
<dbReference type="OMA" id="ELMEWLN"/>
<dbReference type="OrthoDB" id="17644at2759"/>
<dbReference type="PhylomeDB" id="Q8RXH2"/>
<dbReference type="CD-CODE" id="4299E36E">
    <property type="entry name" value="Nucleolus"/>
</dbReference>
<dbReference type="PRO" id="PR:Q8RXH2"/>
<dbReference type="Proteomes" id="UP000006548">
    <property type="component" value="Chromosome 4"/>
</dbReference>
<dbReference type="ExpressionAtlas" id="Q8RXH2">
    <property type="expression patterns" value="baseline and differential"/>
</dbReference>
<dbReference type="GO" id="GO:0005635">
    <property type="term" value="C:nuclear envelope"/>
    <property type="evidence" value="ECO:0000314"/>
    <property type="project" value="TAIR"/>
</dbReference>
<dbReference type="GO" id="GO:0005643">
    <property type="term" value="C:nuclear pore"/>
    <property type="evidence" value="ECO:0007669"/>
    <property type="project" value="UniProtKB-SubCell"/>
</dbReference>
<dbReference type="GO" id="GO:0006406">
    <property type="term" value="P:mRNA export from nucleus"/>
    <property type="evidence" value="ECO:0000315"/>
    <property type="project" value="TAIR"/>
</dbReference>
<dbReference type="GO" id="GO:0015031">
    <property type="term" value="P:protein transport"/>
    <property type="evidence" value="ECO:0007669"/>
    <property type="project" value="UniProtKB-KW"/>
</dbReference>
<dbReference type="GO" id="GO:0009737">
    <property type="term" value="P:response to abscisic acid"/>
    <property type="evidence" value="ECO:0000315"/>
    <property type="project" value="TAIR"/>
</dbReference>
<dbReference type="InterPro" id="IPR011502">
    <property type="entry name" value="Nucleoporin_Nup85"/>
</dbReference>
<dbReference type="PANTHER" id="PTHR13373">
    <property type="entry name" value="FROUNT PROTEIN-RELATED"/>
    <property type="match status" value="1"/>
</dbReference>
<dbReference type="PANTHER" id="PTHR13373:SF21">
    <property type="entry name" value="NUCLEAR PORE COMPLEX PROTEIN NUP85"/>
    <property type="match status" value="1"/>
</dbReference>
<dbReference type="Pfam" id="PF07575">
    <property type="entry name" value="Nucleopor_Nup85"/>
    <property type="match status" value="1"/>
</dbReference>
<gene>
    <name type="primary">NUP85</name>
    <name evidence="3" type="synonym">NUP75</name>
    <name evidence="6" type="ordered locus">At4g32910</name>
    <name evidence="7" type="ORF">F26P21.30</name>
</gene>